<accession>Q9I8A9</accession>
<dbReference type="EMBL" id="AJ277829">
    <property type="protein sequence ID" value="CAB96628.1"/>
    <property type="molecule type" value="mRNA"/>
</dbReference>
<dbReference type="RefSeq" id="NP_001165655.1">
    <property type="nucleotide sequence ID" value="NM_001172184.1"/>
</dbReference>
<dbReference type="SMR" id="Q9I8A9"/>
<dbReference type="GeneID" id="100337573"/>
<dbReference type="CTD" id="100337573"/>
<dbReference type="Proteomes" id="UP000186698">
    <property type="component" value="Unplaced"/>
</dbReference>
<dbReference type="GO" id="GO:0005737">
    <property type="term" value="C:cytoplasm"/>
    <property type="evidence" value="ECO:0007669"/>
    <property type="project" value="UniProtKB-SubCell"/>
</dbReference>
<dbReference type="GO" id="GO:0016607">
    <property type="term" value="C:nuclear speck"/>
    <property type="evidence" value="ECO:0000250"/>
    <property type="project" value="UniProtKB"/>
</dbReference>
<dbReference type="GO" id="GO:0005634">
    <property type="term" value="C:nucleus"/>
    <property type="evidence" value="ECO:0000250"/>
    <property type="project" value="UniProtKB"/>
</dbReference>
<dbReference type="GO" id="GO:0003700">
    <property type="term" value="F:DNA-binding transcription factor activity"/>
    <property type="evidence" value="ECO:0000250"/>
    <property type="project" value="UniProtKB"/>
</dbReference>
<dbReference type="GO" id="GO:0000981">
    <property type="term" value="F:DNA-binding transcription factor activity, RNA polymerase II-specific"/>
    <property type="evidence" value="ECO:0000318"/>
    <property type="project" value="GO_Central"/>
</dbReference>
<dbReference type="GO" id="GO:0046983">
    <property type="term" value="F:protein dimerization activity"/>
    <property type="evidence" value="ECO:0007669"/>
    <property type="project" value="InterPro"/>
</dbReference>
<dbReference type="GO" id="GO:0000977">
    <property type="term" value="F:RNA polymerase II transcription regulatory region sequence-specific DNA binding"/>
    <property type="evidence" value="ECO:0000318"/>
    <property type="project" value="GO_Central"/>
</dbReference>
<dbReference type="GO" id="GO:0001223">
    <property type="term" value="F:transcription coactivator binding"/>
    <property type="evidence" value="ECO:0000250"/>
    <property type="project" value="UniProtKB"/>
</dbReference>
<dbReference type="GO" id="GO:0071456">
    <property type="term" value="P:cellular response to hypoxia"/>
    <property type="evidence" value="ECO:0000318"/>
    <property type="project" value="GO_Central"/>
</dbReference>
<dbReference type="GO" id="GO:0001678">
    <property type="term" value="P:intracellular glucose homeostasis"/>
    <property type="evidence" value="ECO:0000250"/>
    <property type="project" value="UniProtKB"/>
</dbReference>
<dbReference type="GO" id="GO:0045893">
    <property type="term" value="P:positive regulation of DNA-templated transcription"/>
    <property type="evidence" value="ECO:0000250"/>
    <property type="project" value="UniProtKB"/>
</dbReference>
<dbReference type="GO" id="GO:0006357">
    <property type="term" value="P:regulation of transcription by RNA polymerase II"/>
    <property type="evidence" value="ECO:0000318"/>
    <property type="project" value="GO_Central"/>
</dbReference>
<dbReference type="GO" id="GO:0001666">
    <property type="term" value="P:response to hypoxia"/>
    <property type="evidence" value="ECO:0000250"/>
    <property type="project" value="UniProtKB"/>
</dbReference>
<dbReference type="CDD" id="cd00130">
    <property type="entry name" value="PAS"/>
    <property type="match status" value="2"/>
</dbReference>
<dbReference type="FunFam" id="3.30.450.20:FF:000114">
    <property type="entry name" value="Hypoxia inducible factor 1 subunit alpha, like"/>
    <property type="match status" value="1"/>
</dbReference>
<dbReference type="FunFam" id="3.30.450.20:FF:000015">
    <property type="entry name" value="Hypoxia-inducible factor 1-alpha isoform 1"/>
    <property type="match status" value="1"/>
</dbReference>
<dbReference type="Gene3D" id="3.30.450.20">
    <property type="entry name" value="PAS domain"/>
    <property type="match status" value="2"/>
</dbReference>
<dbReference type="InterPro" id="IPR011598">
    <property type="entry name" value="bHLH_dom"/>
</dbReference>
<dbReference type="InterPro" id="IPR001321">
    <property type="entry name" value="HIF-1_alpha"/>
</dbReference>
<dbReference type="InterPro" id="IPR014887">
    <property type="entry name" value="HIF-1_CTAD"/>
</dbReference>
<dbReference type="InterPro" id="IPR021537">
    <property type="entry name" value="HIF_alpha-like"/>
</dbReference>
<dbReference type="InterPro" id="IPR001610">
    <property type="entry name" value="PAC"/>
</dbReference>
<dbReference type="InterPro" id="IPR000014">
    <property type="entry name" value="PAS"/>
</dbReference>
<dbReference type="InterPro" id="IPR035965">
    <property type="entry name" value="PAS-like_dom_sf"/>
</dbReference>
<dbReference type="NCBIfam" id="TIGR00229">
    <property type="entry name" value="sensory_box"/>
    <property type="match status" value="2"/>
</dbReference>
<dbReference type="PANTHER" id="PTHR23043">
    <property type="entry name" value="HYPOXIA-INDUCIBLE FACTOR 1 ALPHA"/>
    <property type="match status" value="1"/>
</dbReference>
<dbReference type="PANTHER" id="PTHR23043:SF7">
    <property type="entry name" value="HYPOXIA-INDUCIBLE FACTOR 1-ALPHA"/>
    <property type="match status" value="1"/>
</dbReference>
<dbReference type="Pfam" id="PF23171">
    <property type="entry name" value="bHLH_HIF1A"/>
    <property type="match status" value="1"/>
</dbReference>
<dbReference type="Pfam" id="PF11413">
    <property type="entry name" value="HIF-1"/>
    <property type="match status" value="1"/>
</dbReference>
<dbReference type="Pfam" id="PF08778">
    <property type="entry name" value="HIF-1a_CTAD"/>
    <property type="match status" value="1"/>
</dbReference>
<dbReference type="Pfam" id="PF14598">
    <property type="entry name" value="PAS_11"/>
    <property type="match status" value="1"/>
</dbReference>
<dbReference type="Pfam" id="PF13426">
    <property type="entry name" value="PAS_9"/>
    <property type="match status" value="1"/>
</dbReference>
<dbReference type="PRINTS" id="PR01080">
    <property type="entry name" value="HYPOXIAIF1A"/>
</dbReference>
<dbReference type="SMART" id="SM00086">
    <property type="entry name" value="PAC"/>
    <property type="match status" value="1"/>
</dbReference>
<dbReference type="SMART" id="SM00091">
    <property type="entry name" value="PAS"/>
    <property type="match status" value="2"/>
</dbReference>
<dbReference type="SUPFAM" id="SSF55785">
    <property type="entry name" value="PYP-like sensor domain (PAS domain)"/>
    <property type="match status" value="2"/>
</dbReference>
<dbReference type="PROSITE" id="PS50888">
    <property type="entry name" value="BHLH"/>
    <property type="match status" value="1"/>
</dbReference>
<dbReference type="PROSITE" id="PS50112">
    <property type="entry name" value="PAS"/>
    <property type="match status" value="2"/>
</dbReference>
<proteinExistence type="evidence at transcript level"/>
<feature type="chain" id="PRO_0000127224" description="Hypoxia-inducible factor 1-alpha">
    <location>
        <begin position="1"/>
        <end position="805"/>
    </location>
</feature>
<feature type="domain" description="bHLH" evidence="4">
    <location>
        <begin position="17"/>
        <end position="70"/>
    </location>
</feature>
<feature type="domain" description="PAS 1" evidence="3">
    <location>
        <begin position="85"/>
        <end position="157"/>
    </location>
</feature>
<feature type="domain" description="PAS 2" evidence="3">
    <location>
        <begin position="229"/>
        <end position="300"/>
    </location>
</feature>
<feature type="domain" description="PAC">
    <location>
        <begin position="303"/>
        <end position="346"/>
    </location>
</feature>
<feature type="region of interest" description="Disordered" evidence="5">
    <location>
        <begin position="1"/>
        <end position="26"/>
    </location>
</feature>
<feature type="region of interest" description="Disordered" evidence="5">
    <location>
        <begin position="628"/>
        <end position="669"/>
    </location>
</feature>
<feature type="compositionally biased region" description="Basic and acidic residues" evidence="5">
    <location>
        <begin position="8"/>
        <end position="26"/>
    </location>
</feature>
<feature type="compositionally biased region" description="Polar residues" evidence="5">
    <location>
        <begin position="629"/>
        <end position="648"/>
    </location>
</feature>
<feature type="modified residue" description="4-hydroxyproline" evidence="1">
    <location>
        <position position="404"/>
    </location>
</feature>
<feature type="modified residue" description="4-hydroxyproline" evidence="1">
    <location>
        <position position="560"/>
    </location>
</feature>
<feature type="modified residue" description="(3S)-3-hydroxyasparagine" evidence="1">
    <location>
        <position position="782"/>
    </location>
</feature>
<comment type="function">
    <text evidence="1">Functions as a master transcriptional regulator of the adaptive response to hypoxia. Under hypoxic conditions, activates the transcription of over 40 genes, including erythropoietin, glucose transporters, glycolytic enzymes, vascular endothelial growth factor, HILPDA, and other genes whose protein products increase oxygen delivery or facilitate metabolic adaptation to hypoxia. Plays an essential role in embryonic vascularization, tumor angiogenesis and pathophysiology of ischemic disease.</text>
</comment>
<comment type="activity regulation">
    <text evidence="1">Induced by reactive oxygen species (ROS).</text>
</comment>
<comment type="subunit">
    <text evidence="1">Efficient DNA binding requires heterodimerization of an alpha and a beta/ARNT subunit.</text>
</comment>
<comment type="subcellular location">
    <subcellularLocation>
        <location evidence="1">Cytoplasm</location>
    </subcellularLocation>
    <subcellularLocation>
        <location evidence="1">Nucleus</location>
    </subcellularLocation>
    <subcellularLocation>
        <location evidence="2">Nucleus speckle</location>
    </subcellularLocation>
    <text evidence="1">Cytoplasmic in normoxia, nuclear translocation in response to hypoxia.</text>
</comment>
<comment type="domain">
    <text evidence="1">Contains two independent C-terminal transactivation domains, NTAD and CTAD, which function synergistically. Their transcriptional activity is repressed by an intervening inhibitory domain (ID) (By similarity).</text>
</comment>
<comment type="PTM">
    <text evidence="1">In normoxia, is hydroxylated on Pro-404 and Pro-560. The hydroxylated prolines promote interaction with VHL, initiating rapid ubiquitination and subsequent proteasomal degradation. Under hypoxia, proline hydroxylation is impaired and ubiquitination is attenuated, resulting in stabilization (By similarity).</text>
</comment>
<comment type="PTM">
    <text evidence="1">In normoxia, is hydroxylated on Asn-782, thus abrogating interaction with CREBBP and EP300 and preventing transcriptional activation.</text>
</comment>
<comment type="PTM">
    <text evidence="1">The iron and 2-oxoglutarate dependent 3-hydroxylation of asparagine is (S) stereospecific within HIF CTAD domains.</text>
</comment>
<protein>
    <recommendedName>
        <fullName>Hypoxia-inducible factor 1-alpha</fullName>
        <shortName>HIF-1-alpha</shortName>
        <shortName>HIF1-alpha</shortName>
    </recommendedName>
</protein>
<gene>
    <name type="primary">hif1a</name>
</gene>
<evidence type="ECO:0000250" key="1">
    <source>
        <dbReference type="UniProtKB" id="Q16665"/>
    </source>
</evidence>
<evidence type="ECO:0000250" key="2">
    <source>
        <dbReference type="UniProtKB" id="Q61221"/>
    </source>
</evidence>
<evidence type="ECO:0000255" key="3">
    <source>
        <dbReference type="PROSITE-ProRule" id="PRU00140"/>
    </source>
</evidence>
<evidence type="ECO:0000255" key="4">
    <source>
        <dbReference type="PROSITE-ProRule" id="PRU00981"/>
    </source>
</evidence>
<evidence type="ECO:0000256" key="5">
    <source>
        <dbReference type="SAM" id="MobiDB-lite"/>
    </source>
</evidence>
<sequence>MEGSVVVSEKKRISSERRKEKSRDAARCRRSNESEVFYELSHELPLPHNVSSHLDKASIMRLDHQLPAVEKVADAGDLDGETELDKQLNCFYLKALEGFVLVLTEEGDMIYLSENVNKCMGLTQFELTGHSVFDFTHPCDHEELREMLTFRNGPAKKRKRTNHREKFLPSYEMYINQSWKNREYKVSHMEGPSLYRTHACIYDNANNQNHCGYKKPPMTCMVVICEPIPHPSNIEFPLDSKTFLSRHSLDMKFSYCDERVTELVGYEPDELLGRSVYEYYHALDSDHLTKPNYNMFTKGQVTTGQYRMLAKKGGYVWVETQATVIYNSKNSQPQCIVCVNYVLSEVVEKDLILSLGQTASVLIPVESQEIKMPEIFTELNEENNSECLFDKLKQEPESLTVLAPDAGDEIIPLDFSSGDSDKPYEDVPLYNDVMLHSTSNKLESTPITPLPAPEMPKPLRSNVDPALNREVVIKMESNPRTTCASIHHSTAIQARQPFRYQFQSEPSTEPNTPEYCFDVDSEMASEFKLDLVEKLFAIDTEAKAPFYYPGNDLDLEMLAPYIPMDDDFQLRTFDQLSSLECDSSIPQTLGSMTTLFHQSLSPSTSDFKPEDAMSDLKTIIQSPVHMMKESTSAPVSPYNGNRSRTSSPVRPAKAVVDKTEKSRPGTPNLPVPLNKRCTILDEELNPKMICFTQCTAEKRKMESDGPLFQAIGIGTLFQTNVDPGPNSSLQWKRVKGSDSERLSSAEQRTILLLSTDMASQLLGQSFDGTVLPQLTGYDCEVNAPVHGTRNLLQGEELLRALDQAN</sequence>
<keyword id="KW-0010">Activator</keyword>
<keyword id="KW-0963">Cytoplasm</keyword>
<keyword id="KW-0238">DNA-binding</keyword>
<keyword id="KW-0379">Hydroxylation</keyword>
<keyword id="KW-0539">Nucleus</keyword>
<keyword id="KW-1185">Reference proteome</keyword>
<keyword id="KW-0677">Repeat</keyword>
<keyword id="KW-0804">Transcription</keyword>
<keyword id="KW-0805">Transcription regulation</keyword>
<keyword id="KW-0832">Ubl conjugation</keyword>
<organism>
    <name type="scientific">Xenopus laevis</name>
    <name type="common">African clawed frog</name>
    <dbReference type="NCBI Taxonomy" id="8355"/>
    <lineage>
        <taxon>Eukaryota</taxon>
        <taxon>Metazoa</taxon>
        <taxon>Chordata</taxon>
        <taxon>Craniata</taxon>
        <taxon>Vertebrata</taxon>
        <taxon>Euteleostomi</taxon>
        <taxon>Amphibia</taxon>
        <taxon>Batrachia</taxon>
        <taxon>Anura</taxon>
        <taxon>Pipoidea</taxon>
        <taxon>Pipidae</taxon>
        <taxon>Xenopodinae</taxon>
        <taxon>Xenopus</taxon>
        <taxon>Xenopus</taxon>
    </lineage>
</organism>
<name>HIF1A_XENLA</name>
<reference key="1">
    <citation type="submission" date="2000-05" db="EMBL/GenBank/DDBJ databases">
        <title>Cloning and expression of the Xenopus laevis hypoxia inducible factor 1 alpha homologue.</title>
        <authorList>
            <person name="Kietzmann T."/>
        </authorList>
    </citation>
    <scope>NUCLEOTIDE SEQUENCE [MRNA]</scope>
</reference>